<name>TRPD_SACD2</name>
<proteinExistence type="inferred from homology"/>
<dbReference type="EC" id="2.4.2.18" evidence="1"/>
<dbReference type="EMBL" id="CP000282">
    <property type="protein sequence ID" value="ABD80015.1"/>
    <property type="molecule type" value="Genomic_DNA"/>
</dbReference>
<dbReference type="RefSeq" id="WP_011467236.1">
    <property type="nucleotide sequence ID" value="NC_007912.1"/>
</dbReference>
<dbReference type="SMR" id="Q21MR4"/>
<dbReference type="STRING" id="203122.Sde_0753"/>
<dbReference type="GeneID" id="98612438"/>
<dbReference type="KEGG" id="sde:Sde_0753"/>
<dbReference type="eggNOG" id="COG0547">
    <property type="taxonomic scope" value="Bacteria"/>
</dbReference>
<dbReference type="HOGENOM" id="CLU_034315_2_1_6"/>
<dbReference type="OrthoDB" id="9806430at2"/>
<dbReference type="UniPathway" id="UPA00035">
    <property type="reaction ID" value="UER00041"/>
</dbReference>
<dbReference type="Proteomes" id="UP000001947">
    <property type="component" value="Chromosome"/>
</dbReference>
<dbReference type="GO" id="GO:0005829">
    <property type="term" value="C:cytosol"/>
    <property type="evidence" value="ECO:0007669"/>
    <property type="project" value="TreeGrafter"/>
</dbReference>
<dbReference type="GO" id="GO:0004048">
    <property type="term" value="F:anthranilate phosphoribosyltransferase activity"/>
    <property type="evidence" value="ECO:0007669"/>
    <property type="project" value="UniProtKB-UniRule"/>
</dbReference>
<dbReference type="GO" id="GO:0000287">
    <property type="term" value="F:magnesium ion binding"/>
    <property type="evidence" value="ECO:0007669"/>
    <property type="project" value="UniProtKB-UniRule"/>
</dbReference>
<dbReference type="GO" id="GO:0000162">
    <property type="term" value="P:L-tryptophan biosynthetic process"/>
    <property type="evidence" value="ECO:0007669"/>
    <property type="project" value="UniProtKB-UniRule"/>
</dbReference>
<dbReference type="FunFam" id="1.20.970.10:FF:000006">
    <property type="entry name" value="Anthranilate phosphoribosyltransferase"/>
    <property type="match status" value="1"/>
</dbReference>
<dbReference type="FunFam" id="3.40.1030.10:FF:000002">
    <property type="entry name" value="Anthranilate phosphoribosyltransferase"/>
    <property type="match status" value="1"/>
</dbReference>
<dbReference type="Gene3D" id="3.40.1030.10">
    <property type="entry name" value="Nucleoside phosphorylase/phosphoribosyltransferase catalytic domain"/>
    <property type="match status" value="1"/>
</dbReference>
<dbReference type="Gene3D" id="1.20.970.10">
    <property type="entry name" value="Transferase, Pyrimidine Nucleoside Phosphorylase, Chain C"/>
    <property type="match status" value="1"/>
</dbReference>
<dbReference type="HAMAP" id="MF_00211">
    <property type="entry name" value="TrpD"/>
    <property type="match status" value="1"/>
</dbReference>
<dbReference type="InterPro" id="IPR005940">
    <property type="entry name" value="Anthranilate_Pribosyl_Tfrase"/>
</dbReference>
<dbReference type="InterPro" id="IPR000312">
    <property type="entry name" value="Glycosyl_Trfase_fam3"/>
</dbReference>
<dbReference type="InterPro" id="IPR017459">
    <property type="entry name" value="Glycosyl_Trfase_fam3_N_dom"/>
</dbReference>
<dbReference type="InterPro" id="IPR036320">
    <property type="entry name" value="Glycosyl_Trfase_fam3_N_dom_sf"/>
</dbReference>
<dbReference type="InterPro" id="IPR035902">
    <property type="entry name" value="Nuc_phospho_transferase"/>
</dbReference>
<dbReference type="NCBIfam" id="TIGR01245">
    <property type="entry name" value="trpD"/>
    <property type="match status" value="1"/>
</dbReference>
<dbReference type="PANTHER" id="PTHR43285">
    <property type="entry name" value="ANTHRANILATE PHOSPHORIBOSYLTRANSFERASE"/>
    <property type="match status" value="1"/>
</dbReference>
<dbReference type="PANTHER" id="PTHR43285:SF2">
    <property type="entry name" value="ANTHRANILATE PHOSPHORIBOSYLTRANSFERASE"/>
    <property type="match status" value="1"/>
</dbReference>
<dbReference type="Pfam" id="PF02885">
    <property type="entry name" value="Glycos_trans_3N"/>
    <property type="match status" value="1"/>
</dbReference>
<dbReference type="Pfam" id="PF00591">
    <property type="entry name" value="Glycos_transf_3"/>
    <property type="match status" value="1"/>
</dbReference>
<dbReference type="SUPFAM" id="SSF52418">
    <property type="entry name" value="Nucleoside phosphorylase/phosphoribosyltransferase catalytic domain"/>
    <property type="match status" value="1"/>
</dbReference>
<dbReference type="SUPFAM" id="SSF47648">
    <property type="entry name" value="Nucleoside phosphorylase/phosphoribosyltransferase N-terminal domain"/>
    <property type="match status" value="1"/>
</dbReference>
<keyword id="KW-0028">Amino-acid biosynthesis</keyword>
<keyword id="KW-0057">Aromatic amino acid biosynthesis</keyword>
<keyword id="KW-0328">Glycosyltransferase</keyword>
<keyword id="KW-0460">Magnesium</keyword>
<keyword id="KW-0479">Metal-binding</keyword>
<keyword id="KW-1185">Reference proteome</keyword>
<keyword id="KW-0808">Transferase</keyword>
<keyword id="KW-0822">Tryptophan biosynthesis</keyword>
<evidence type="ECO:0000255" key="1">
    <source>
        <dbReference type="HAMAP-Rule" id="MF_00211"/>
    </source>
</evidence>
<organism>
    <name type="scientific">Saccharophagus degradans (strain 2-40 / ATCC 43961 / DSM 17024)</name>
    <dbReference type="NCBI Taxonomy" id="203122"/>
    <lineage>
        <taxon>Bacteria</taxon>
        <taxon>Pseudomonadati</taxon>
        <taxon>Pseudomonadota</taxon>
        <taxon>Gammaproteobacteria</taxon>
        <taxon>Cellvibrionales</taxon>
        <taxon>Cellvibrionaceae</taxon>
        <taxon>Saccharophagus</taxon>
    </lineage>
</organism>
<feature type="chain" id="PRO_1000043062" description="Anthranilate phosphoribosyltransferase">
    <location>
        <begin position="1"/>
        <end position="341"/>
    </location>
</feature>
<feature type="binding site" evidence="1">
    <location>
        <position position="81"/>
    </location>
    <ligand>
        <name>5-phospho-alpha-D-ribose 1-diphosphate</name>
        <dbReference type="ChEBI" id="CHEBI:58017"/>
    </ligand>
</feature>
<feature type="binding site" evidence="1">
    <location>
        <position position="81"/>
    </location>
    <ligand>
        <name>anthranilate</name>
        <dbReference type="ChEBI" id="CHEBI:16567"/>
        <label>1</label>
    </ligand>
</feature>
<feature type="binding site" evidence="1">
    <location>
        <begin position="84"/>
        <end position="85"/>
    </location>
    <ligand>
        <name>5-phospho-alpha-D-ribose 1-diphosphate</name>
        <dbReference type="ChEBI" id="CHEBI:58017"/>
    </ligand>
</feature>
<feature type="binding site" evidence="1">
    <location>
        <begin position="91"/>
        <end position="94"/>
    </location>
    <ligand>
        <name>5-phospho-alpha-D-ribose 1-diphosphate</name>
        <dbReference type="ChEBI" id="CHEBI:58017"/>
    </ligand>
</feature>
<feature type="binding site" evidence="1">
    <location>
        <position position="93"/>
    </location>
    <ligand>
        <name>Mg(2+)</name>
        <dbReference type="ChEBI" id="CHEBI:18420"/>
        <label>1</label>
    </ligand>
</feature>
<feature type="binding site" evidence="1">
    <location>
        <begin position="109"/>
        <end position="117"/>
    </location>
    <ligand>
        <name>5-phospho-alpha-D-ribose 1-diphosphate</name>
        <dbReference type="ChEBI" id="CHEBI:58017"/>
    </ligand>
</feature>
<feature type="binding site" evidence="1">
    <location>
        <position position="112"/>
    </location>
    <ligand>
        <name>anthranilate</name>
        <dbReference type="ChEBI" id="CHEBI:16567"/>
        <label>1</label>
    </ligand>
</feature>
<feature type="binding site" evidence="1">
    <location>
        <position position="121"/>
    </location>
    <ligand>
        <name>5-phospho-alpha-D-ribose 1-diphosphate</name>
        <dbReference type="ChEBI" id="CHEBI:58017"/>
    </ligand>
</feature>
<feature type="binding site" evidence="1">
    <location>
        <position position="167"/>
    </location>
    <ligand>
        <name>anthranilate</name>
        <dbReference type="ChEBI" id="CHEBI:16567"/>
        <label>2</label>
    </ligand>
</feature>
<feature type="binding site" evidence="1">
    <location>
        <position position="226"/>
    </location>
    <ligand>
        <name>Mg(2+)</name>
        <dbReference type="ChEBI" id="CHEBI:18420"/>
        <label>2</label>
    </ligand>
</feature>
<feature type="binding site" evidence="1">
    <location>
        <position position="227"/>
    </location>
    <ligand>
        <name>Mg(2+)</name>
        <dbReference type="ChEBI" id="CHEBI:18420"/>
        <label>1</label>
    </ligand>
</feature>
<feature type="binding site" evidence="1">
    <location>
        <position position="227"/>
    </location>
    <ligand>
        <name>Mg(2+)</name>
        <dbReference type="ChEBI" id="CHEBI:18420"/>
        <label>2</label>
    </ligand>
</feature>
<sequence length="341" mass="35149">MNIKDALALVVNGKDLSVEQMTDVMREVMTGKATDAQRGAFLVALRIKSETLDEITGAAKVMRELATKVVVNADNLVDTCGTGGDGANLFNVSTASAFVVAAAGGHVAKHGNRSVSSSTGSADVLEAAGVNLQMPADQVARAIETIGVGFMFAPAHHSAMKHAIGPRKELGLRTIFNMLGPMTNPAGVKNQVIGVFTKALCRPMAEVLGRLGSEHVLVVHSEDGLDELSIAAPSHVAEYHKGNVTEYTLSPADVGIEMQSLEGLGVATAEESLALINGAFAGSDEPAAQKAAAIIALNAGAAIYVSGLATSFKDGVAMAEDALATGAAREKLKELVEFSAL</sequence>
<comment type="function">
    <text evidence="1">Catalyzes the transfer of the phosphoribosyl group of 5-phosphorylribose-1-pyrophosphate (PRPP) to anthranilate to yield N-(5'-phosphoribosyl)-anthranilate (PRA).</text>
</comment>
<comment type="catalytic activity">
    <reaction evidence="1">
        <text>N-(5-phospho-beta-D-ribosyl)anthranilate + diphosphate = 5-phospho-alpha-D-ribose 1-diphosphate + anthranilate</text>
        <dbReference type="Rhea" id="RHEA:11768"/>
        <dbReference type="ChEBI" id="CHEBI:16567"/>
        <dbReference type="ChEBI" id="CHEBI:18277"/>
        <dbReference type="ChEBI" id="CHEBI:33019"/>
        <dbReference type="ChEBI" id="CHEBI:58017"/>
        <dbReference type="EC" id="2.4.2.18"/>
    </reaction>
</comment>
<comment type="cofactor">
    <cofactor evidence="1">
        <name>Mg(2+)</name>
        <dbReference type="ChEBI" id="CHEBI:18420"/>
    </cofactor>
    <text evidence="1">Binds 2 magnesium ions per monomer.</text>
</comment>
<comment type="pathway">
    <text evidence="1">Amino-acid biosynthesis; L-tryptophan biosynthesis; L-tryptophan from chorismate: step 2/5.</text>
</comment>
<comment type="subunit">
    <text evidence="1">Homodimer.</text>
</comment>
<comment type="similarity">
    <text evidence="1">Belongs to the anthranilate phosphoribosyltransferase family.</text>
</comment>
<reference key="1">
    <citation type="journal article" date="2008" name="PLoS Genet.">
        <title>Complete genome sequence of the complex carbohydrate-degrading marine bacterium, Saccharophagus degradans strain 2-40 T.</title>
        <authorList>
            <person name="Weiner R.M."/>
            <person name="Taylor L.E. II"/>
            <person name="Henrissat B."/>
            <person name="Hauser L."/>
            <person name="Land M."/>
            <person name="Coutinho P.M."/>
            <person name="Rancurel C."/>
            <person name="Saunders E.H."/>
            <person name="Longmire A.G."/>
            <person name="Zhang H."/>
            <person name="Bayer E.A."/>
            <person name="Gilbert H.J."/>
            <person name="Larimer F."/>
            <person name="Zhulin I.B."/>
            <person name="Ekborg N.A."/>
            <person name="Lamed R."/>
            <person name="Richardson P.M."/>
            <person name="Borovok I."/>
            <person name="Hutcheson S."/>
        </authorList>
    </citation>
    <scope>NUCLEOTIDE SEQUENCE [LARGE SCALE GENOMIC DNA]</scope>
    <source>
        <strain>2-40 / ATCC 43961 / DSM 17024</strain>
    </source>
</reference>
<accession>Q21MR4</accession>
<protein>
    <recommendedName>
        <fullName evidence="1">Anthranilate phosphoribosyltransferase</fullName>
        <ecNumber evidence="1">2.4.2.18</ecNumber>
    </recommendedName>
</protein>
<gene>
    <name evidence="1" type="primary">trpD</name>
    <name type="ordered locus">Sde_0753</name>
</gene>